<dbReference type="EC" id="2.4.1.227" evidence="1"/>
<dbReference type="EMBL" id="CP000853">
    <property type="protein sequence ID" value="ABW18923.1"/>
    <property type="molecule type" value="Genomic_DNA"/>
</dbReference>
<dbReference type="RefSeq" id="WP_012159235.1">
    <property type="nucleotide sequence ID" value="NC_009922.1"/>
</dbReference>
<dbReference type="SMR" id="A8MH36"/>
<dbReference type="STRING" id="350688.Clos_1379"/>
<dbReference type="CAZy" id="GT28">
    <property type="family name" value="Glycosyltransferase Family 28"/>
</dbReference>
<dbReference type="KEGG" id="aoe:Clos_1379"/>
<dbReference type="eggNOG" id="COG0707">
    <property type="taxonomic scope" value="Bacteria"/>
</dbReference>
<dbReference type="HOGENOM" id="CLU_037404_0_1_9"/>
<dbReference type="OrthoDB" id="9808936at2"/>
<dbReference type="UniPathway" id="UPA00219"/>
<dbReference type="Proteomes" id="UP000000269">
    <property type="component" value="Chromosome"/>
</dbReference>
<dbReference type="GO" id="GO:0005886">
    <property type="term" value="C:plasma membrane"/>
    <property type="evidence" value="ECO:0007669"/>
    <property type="project" value="UniProtKB-SubCell"/>
</dbReference>
<dbReference type="GO" id="GO:0051991">
    <property type="term" value="F:UDP-N-acetyl-D-glucosamine:N-acetylmuramoyl-L-alanyl-D-glutamyl-meso-2,6-diaminopimelyl-D-alanyl-D-alanine-diphosphoundecaprenol 4-beta-N-acetylglucosaminlytransferase activity"/>
    <property type="evidence" value="ECO:0007669"/>
    <property type="project" value="RHEA"/>
</dbReference>
<dbReference type="GO" id="GO:0050511">
    <property type="term" value="F:undecaprenyldiphospho-muramoylpentapeptide beta-N-acetylglucosaminyltransferase activity"/>
    <property type="evidence" value="ECO:0007669"/>
    <property type="project" value="UniProtKB-UniRule"/>
</dbReference>
<dbReference type="GO" id="GO:0005975">
    <property type="term" value="P:carbohydrate metabolic process"/>
    <property type="evidence" value="ECO:0007669"/>
    <property type="project" value="InterPro"/>
</dbReference>
<dbReference type="GO" id="GO:0051301">
    <property type="term" value="P:cell division"/>
    <property type="evidence" value="ECO:0007669"/>
    <property type="project" value="UniProtKB-KW"/>
</dbReference>
<dbReference type="GO" id="GO:0071555">
    <property type="term" value="P:cell wall organization"/>
    <property type="evidence" value="ECO:0007669"/>
    <property type="project" value="UniProtKB-KW"/>
</dbReference>
<dbReference type="GO" id="GO:0030259">
    <property type="term" value="P:lipid glycosylation"/>
    <property type="evidence" value="ECO:0007669"/>
    <property type="project" value="UniProtKB-UniRule"/>
</dbReference>
<dbReference type="GO" id="GO:0009252">
    <property type="term" value="P:peptidoglycan biosynthetic process"/>
    <property type="evidence" value="ECO:0007669"/>
    <property type="project" value="UniProtKB-UniRule"/>
</dbReference>
<dbReference type="GO" id="GO:0008360">
    <property type="term" value="P:regulation of cell shape"/>
    <property type="evidence" value="ECO:0007669"/>
    <property type="project" value="UniProtKB-KW"/>
</dbReference>
<dbReference type="CDD" id="cd03785">
    <property type="entry name" value="GT28_MurG"/>
    <property type="match status" value="1"/>
</dbReference>
<dbReference type="Gene3D" id="3.40.50.2000">
    <property type="entry name" value="Glycogen Phosphorylase B"/>
    <property type="match status" value="2"/>
</dbReference>
<dbReference type="HAMAP" id="MF_00033">
    <property type="entry name" value="MurG"/>
    <property type="match status" value="1"/>
</dbReference>
<dbReference type="InterPro" id="IPR006009">
    <property type="entry name" value="GlcNAc_MurG"/>
</dbReference>
<dbReference type="InterPro" id="IPR007235">
    <property type="entry name" value="Glyco_trans_28_C"/>
</dbReference>
<dbReference type="InterPro" id="IPR004276">
    <property type="entry name" value="GlycoTrans_28_N"/>
</dbReference>
<dbReference type="NCBIfam" id="TIGR01133">
    <property type="entry name" value="murG"/>
    <property type="match status" value="1"/>
</dbReference>
<dbReference type="PANTHER" id="PTHR21015:SF22">
    <property type="entry name" value="GLYCOSYLTRANSFERASE"/>
    <property type="match status" value="1"/>
</dbReference>
<dbReference type="PANTHER" id="PTHR21015">
    <property type="entry name" value="UDP-N-ACETYLGLUCOSAMINE--N-ACETYLMURAMYL-(PENTAPEPTIDE) PYROPHOSPHORYL-UNDECAPRENOL N-ACETYLGLUCOSAMINE TRANSFERASE 1"/>
    <property type="match status" value="1"/>
</dbReference>
<dbReference type="Pfam" id="PF04101">
    <property type="entry name" value="Glyco_tran_28_C"/>
    <property type="match status" value="1"/>
</dbReference>
<dbReference type="Pfam" id="PF03033">
    <property type="entry name" value="Glyco_transf_28"/>
    <property type="match status" value="1"/>
</dbReference>
<dbReference type="SUPFAM" id="SSF53756">
    <property type="entry name" value="UDP-Glycosyltransferase/glycogen phosphorylase"/>
    <property type="match status" value="1"/>
</dbReference>
<proteinExistence type="inferred from homology"/>
<accession>A8MH36</accession>
<name>MURG_ALKOO</name>
<organism>
    <name type="scientific">Alkaliphilus oremlandii (strain OhILAs)</name>
    <name type="common">Clostridium oremlandii (strain OhILAs)</name>
    <dbReference type="NCBI Taxonomy" id="350688"/>
    <lineage>
        <taxon>Bacteria</taxon>
        <taxon>Bacillati</taxon>
        <taxon>Bacillota</taxon>
        <taxon>Clostridia</taxon>
        <taxon>Peptostreptococcales</taxon>
        <taxon>Natronincolaceae</taxon>
        <taxon>Alkaliphilus</taxon>
    </lineage>
</organism>
<comment type="function">
    <text evidence="1">Cell wall formation. Catalyzes the transfer of a GlcNAc subunit on undecaprenyl-pyrophosphoryl-MurNAc-pentapeptide (lipid intermediate I) to form undecaprenyl-pyrophosphoryl-MurNAc-(pentapeptide)GlcNAc (lipid intermediate II).</text>
</comment>
<comment type="catalytic activity">
    <reaction evidence="1">
        <text>di-trans,octa-cis-undecaprenyl diphospho-N-acetyl-alpha-D-muramoyl-L-alanyl-D-glutamyl-meso-2,6-diaminopimeloyl-D-alanyl-D-alanine + UDP-N-acetyl-alpha-D-glucosamine = di-trans,octa-cis-undecaprenyl diphospho-[N-acetyl-alpha-D-glucosaminyl-(1-&gt;4)]-N-acetyl-alpha-D-muramoyl-L-alanyl-D-glutamyl-meso-2,6-diaminopimeloyl-D-alanyl-D-alanine + UDP + H(+)</text>
        <dbReference type="Rhea" id="RHEA:31227"/>
        <dbReference type="ChEBI" id="CHEBI:15378"/>
        <dbReference type="ChEBI" id="CHEBI:57705"/>
        <dbReference type="ChEBI" id="CHEBI:58223"/>
        <dbReference type="ChEBI" id="CHEBI:61387"/>
        <dbReference type="ChEBI" id="CHEBI:61388"/>
        <dbReference type="EC" id="2.4.1.227"/>
    </reaction>
</comment>
<comment type="pathway">
    <text evidence="1">Cell wall biogenesis; peptidoglycan biosynthesis.</text>
</comment>
<comment type="subcellular location">
    <subcellularLocation>
        <location evidence="1">Cell membrane</location>
        <topology evidence="1">Peripheral membrane protein</topology>
        <orientation evidence="1">Cytoplasmic side</orientation>
    </subcellularLocation>
</comment>
<comment type="similarity">
    <text evidence="1">Belongs to the glycosyltransferase 28 family. MurG subfamily.</text>
</comment>
<evidence type="ECO:0000255" key="1">
    <source>
        <dbReference type="HAMAP-Rule" id="MF_00033"/>
    </source>
</evidence>
<keyword id="KW-0131">Cell cycle</keyword>
<keyword id="KW-0132">Cell division</keyword>
<keyword id="KW-1003">Cell membrane</keyword>
<keyword id="KW-0133">Cell shape</keyword>
<keyword id="KW-0961">Cell wall biogenesis/degradation</keyword>
<keyword id="KW-0328">Glycosyltransferase</keyword>
<keyword id="KW-0472">Membrane</keyword>
<keyword id="KW-0573">Peptidoglycan synthesis</keyword>
<keyword id="KW-1185">Reference proteome</keyword>
<keyword id="KW-0808">Transferase</keyword>
<sequence>MRVILSGGGTGGHIYPAISIANKIKEQHPKAEILFIGTENGMESEIVPKAGYPIKYVTVSYLKRKISLHNVKSAAMLLKGIAEARKIIKEFKPDIVIGTGGFVCGPVLYMASKLGIRTMIHEQNVFPGLTNRILDRYVDRIALSFKDAEKYFKHKNKLVVTGNPIRSDFMEVTEVEASARYKTDSDLPLVLVVGGSGGALKINRAVVEILNQYQPNKYRLLLVTGKRLYKSTLESINAESLQSKHKVFAYVNDMPHALKACDLIVCSAGAITIAEVTAVGKASILIPKAHTAENHQEYNANAMGNKGAAVVIREDELSGEILNKKIQDIIGNIQVVKKMEAASYKEGIRDAADRIYSEMQALLERK</sequence>
<gene>
    <name evidence="1" type="primary">murG</name>
    <name type="ordered locus">Clos_1379</name>
</gene>
<reference key="1">
    <citation type="submission" date="2007-10" db="EMBL/GenBank/DDBJ databases">
        <title>Complete genome of Alkaliphilus oremlandii OhILAs.</title>
        <authorList>
            <person name="Copeland A."/>
            <person name="Lucas S."/>
            <person name="Lapidus A."/>
            <person name="Barry K."/>
            <person name="Detter J.C."/>
            <person name="Glavina del Rio T."/>
            <person name="Hammon N."/>
            <person name="Israni S."/>
            <person name="Dalin E."/>
            <person name="Tice H."/>
            <person name="Pitluck S."/>
            <person name="Chain P."/>
            <person name="Malfatti S."/>
            <person name="Shin M."/>
            <person name="Vergez L."/>
            <person name="Schmutz J."/>
            <person name="Larimer F."/>
            <person name="Land M."/>
            <person name="Hauser L."/>
            <person name="Kyrpides N."/>
            <person name="Mikhailova N."/>
            <person name="Stolz J.F."/>
            <person name="Dawson A."/>
            <person name="Fisher E."/>
            <person name="Crable B."/>
            <person name="Perera E."/>
            <person name="Lisak J."/>
            <person name="Ranganathan M."/>
            <person name="Basu P."/>
            <person name="Richardson P."/>
        </authorList>
    </citation>
    <scope>NUCLEOTIDE SEQUENCE [LARGE SCALE GENOMIC DNA]</scope>
    <source>
        <strain>OhILAs</strain>
    </source>
</reference>
<feature type="chain" id="PRO_1000057244" description="UDP-N-acetylglucosamine--N-acetylmuramyl-(pentapeptide) pyrophosphoryl-undecaprenol N-acetylglucosamine transferase">
    <location>
        <begin position="1"/>
        <end position="366"/>
    </location>
</feature>
<feature type="binding site" evidence="1">
    <location>
        <begin position="10"/>
        <end position="12"/>
    </location>
    <ligand>
        <name>UDP-N-acetyl-alpha-D-glucosamine</name>
        <dbReference type="ChEBI" id="CHEBI:57705"/>
    </ligand>
</feature>
<feature type="binding site" evidence="1">
    <location>
        <position position="124"/>
    </location>
    <ligand>
        <name>UDP-N-acetyl-alpha-D-glucosamine</name>
        <dbReference type="ChEBI" id="CHEBI:57705"/>
    </ligand>
</feature>
<feature type="binding site" evidence="1">
    <location>
        <position position="166"/>
    </location>
    <ligand>
        <name>UDP-N-acetyl-alpha-D-glucosamine</name>
        <dbReference type="ChEBI" id="CHEBI:57705"/>
    </ligand>
</feature>
<feature type="binding site" evidence="1">
    <location>
        <position position="196"/>
    </location>
    <ligand>
        <name>UDP-N-acetyl-alpha-D-glucosamine</name>
        <dbReference type="ChEBI" id="CHEBI:57705"/>
    </ligand>
</feature>
<feature type="binding site" evidence="1">
    <location>
        <position position="296"/>
    </location>
    <ligand>
        <name>UDP-N-acetyl-alpha-D-glucosamine</name>
        <dbReference type="ChEBI" id="CHEBI:57705"/>
    </ligand>
</feature>
<protein>
    <recommendedName>
        <fullName evidence="1">UDP-N-acetylglucosamine--N-acetylmuramyl-(pentapeptide) pyrophosphoryl-undecaprenol N-acetylglucosamine transferase</fullName>
        <ecNumber evidence="1">2.4.1.227</ecNumber>
    </recommendedName>
    <alternativeName>
        <fullName evidence="1">Undecaprenyl-PP-MurNAc-pentapeptide-UDPGlcNAc GlcNAc transferase</fullName>
    </alternativeName>
</protein>